<dbReference type="EC" id="1.1.1.337"/>
<dbReference type="EMBL" id="AE000666">
    <property type="protein sequence ID" value="AAB85694.1"/>
    <property type="molecule type" value="Genomic_DNA"/>
</dbReference>
<dbReference type="PIR" id="H69027">
    <property type="entry name" value="H69027"/>
</dbReference>
<dbReference type="RefSeq" id="WP_010876829.1">
    <property type="nucleotide sequence ID" value="NC_000916.1"/>
</dbReference>
<dbReference type="SMR" id="O27273"/>
<dbReference type="FunCoup" id="O27273">
    <property type="interactions" value="91"/>
</dbReference>
<dbReference type="STRING" id="187420.MTH_1205"/>
<dbReference type="PaxDb" id="187420-MTH_1205"/>
<dbReference type="EnsemblBacteria" id="AAB85694">
    <property type="protein sequence ID" value="AAB85694"/>
    <property type="gene ID" value="MTH_1205"/>
</dbReference>
<dbReference type="GeneID" id="1471613"/>
<dbReference type="GeneID" id="77401733"/>
<dbReference type="KEGG" id="mth:MTH_1205"/>
<dbReference type="PATRIC" id="fig|187420.15.peg.1183"/>
<dbReference type="HOGENOM" id="CLU_040452_3_1_2"/>
<dbReference type="InParanoid" id="O27273"/>
<dbReference type="UniPathway" id="UPA00065"/>
<dbReference type="UniPathway" id="UPA00355">
    <property type="reaction ID" value="UER00471"/>
</dbReference>
<dbReference type="Proteomes" id="UP000005223">
    <property type="component" value="Chromosome"/>
</dbReference>
<dbReference type="GO" id="GO:0005737">
    <property type="term" value="C:cytoplasm"/>
    <property type="evidence" value="ECO:0007669"/>
    <property type="project" value="UniProtKB-SubCell"/>
</dbReference>
<dbReference type="GO" id="GO:0102443">
    <property type="term" value="F:L-2-hydroxycarboxylate dehydrogenase (NAD+) activity"/>
    <property type="evidence" value="ECO:0007669"/>
    <property type="project" value="UniProtKB-EC"/>
</dbReference>
<dbReference type="GO" id="GO:0019295">
    <property type="term" value="P:coenzyme M biosynthetic process"/>
    <property type="evidence" value="ECO:0007669"/>
    <property type="project" value="UniProtKB-UniPathway"/>
</dbReference>
<dbReference type="Gene3D" id="1.10.1530.10">
    <property type="match status" value="1"/>
</dbReference>
<dbReference type="Gene3D" id="3.30.1370.60">
    <property type="entry name" value="Hypothetical oxidoreductase yiak, domain 2"/>
    <property type="match status" value="1"/>
</dbReference>
<dbReference type="InterPro" id="IPR053453">
    <property type="entry name" value="LDH2/MDH2_Oxidoreductase"/>
</dbReference>
<dbReference type="InterPro" id="IPR043144">
    <property type="entry name" value="Mal/L-sulf/L-lact_DH-like_ah"/>
</dbReference>
<dbReference type="InterPro" id="IPR043143">
    <property type="entry name" value="Mal/L-sulf/L-lact_DH-like_NADP"/>
</dbReference>
<dbReference type="InterPro" id="IPR036111">
    <property type="entry name" value="Mal/L-sulfo/L-lacto_DH-like_sf"/>
</dbReference>
<dbReference type="InterPro" id="IPR003767">
    <property type="entry name" value="Malate/L-lactate_DH-like"/>
</dbReference>
<dbReference type="NCBIfam" id="NF040650">
    <property type="entry name" value="sulfolac_dhydr"/>
    <property type="match status" value="1"/>
</dbReference>
<dbReference type="PANTHER" id="PTHR11091:SF0">
    <property type="entry name" value="MALATE DEHYDROGENASE"/>
    <property type="match status" value="1"/>
</dbReference>
<dbReference type="PANTHER" id="PTHR11091">
    <property type="entry name" value="OXIDOREDUCTASE-RELATED"/>
    <property type="match status" value="1"/>
</dbReference>
<dbReference type="Pfam" id="PF02615">
    <property type="entry name" value="Ldh_2"/>
    <property type="match status" value="1"/>
</dbReference>
<dbReference type="SUPFAM" id="SSF89733">
    <property type="entry name" value="L-sulfolactate dehydrogenase-like"/>
    <property type="match status" value="1"/>
</dbReference>
<proteinExistence type="inferred from homology"/>
<gene>
    <name type="primary">comC</name>
    <name type="ordered locus">MTH_1205</name>
</gene>
<evidence type="ECO:0000250" key="1"/>
<evidence type="ECO:0000305" key="2"/>
<comment type="function">
    <text evidence="1">Catalyzes the reduction of sulfopyruvate to (R)-sulfolactate. Involved in the biosynthesis of both coenzyme M (with (R)-sulfolactate) and methanopterin (with alpha-ketoglutarate) (By similarity).</text>
</comment>
<comment type="catalytic activity">
    <reaction>
        <text>a (2S)-2-hydroxycarboxylate + NAD(+) = a 2-oxocarboxylate + NADH + H(+)</text>
        <dbReference type="Rhea" id="RHEA:34555"/>
        <dbReference type="ChEBI" id="CHEBI:15378"/>
        <dbReference type="ChEBI" id="CHEBI:35179"/>
        <dbReference type="ChEBI" id="CHEBI:57540"/>
        <dbReference type="ChEBI" id="CHEBI:57945"/>
        <dbReference type="ChEBI" id="CHEBI:58123"/>
        <dbReference type="EC" id="1.1.1.337"/>
    </reaction>
</comment>
<comment type="pathway">
    <text>Cofactor biosynthesis; coenzyme M biosynthesis; sulfoacetaldehyde from phosphoenolpyruvate and sulfite: step 3/4.</text>
</comment>
<comment type="pathway">
    <text>Cofactor biosynthesis; 5,6,7,8-tetrahydromethanopterin biosynthesis.</text>
</comment>
<comment type="subcellular location">
    <subcellularLocation>
        <location evidence="1">Cytoplasm</location>
    </subcellularLocation>
</comment>
<comment type="similarity">
    <text evidence="2">Belongs to the LDH2/MDH2 oxidoreductase family.</text>
</comment>
<organism>
    <name type="scientific">Methanothermobacter thermautotrophicus (strain ATCC 29096 / DSM 1053 / JCM 10044 / NBRC 100330 / Delta H)</name>
    <name type="common">Methanobacterium thermoautotrophicum</name>
    <dbReference type="NCBI Taxonomy" id="187420"/>
    <lineage>
        <taxon>Archaea</taxon>
        <taxon>Methanobacteriati</taxon>
        <taxon>Methanobacteriota</taxon>
        <taxon>Methanomada group</taxon>
        <taxon>Methanobacteria</taxon>
        <taxon>Methanobacteriales</taxon>
        <taxon>Methanobacteriaceae</taxon>
        <taxon>Methanothermobacter</taxon>
    </lineage>
</organism>
<reference key="1">
    <citation type="journal article" date="1997" name="J. Bacteriol.">
        <title>Complete genome sequence of Methanobacterium thermoautotrophicum deltaH: functional analysis and comparative genomics.</title>
        <authorList>
            <person name="Smith D.R."/>
            <person name="Doucette-Stamm L.A."/>
            <person name="Deloughery C."/>
            <person name="Lee H.-M."/>
            <person name="Dubois J."/>
            <person name="Aldredge T."/>
            <person name="Bashirzadeh R."/>
            <person name="Blakely D."/>
            <person name="Cook R."/>
            <person name="Gilbert K."/>
            <person name="Harrison D."/>
            <person name="Hoang L."/>
            <person name="Keagle P."/>
            <person name="Lumm W."/>
            <person name="Pothier B."/>
            <person name="Qiu D."/>
            <person name="Spadafora R."/>
            <person name="Vicare R."/>
            <person name="Wang Y."/>
            <person name="Wierzbowski J."/>
            <person name="Gibson R."/>
            <person name="Jiwani N."/>
            <person name="Caruso A."/>
            <person name="Bush D."/>
            <person name="Safer H."/>
            <person name="Patwell D."/>
            <person name="Prabhakar S."/>
            <person name="McDougall S."/>
            <person name="Shimer G."/>
            <person name="Goyal A."/>
            <person name="Pietrovski S."/>
            <person name="Church G.M."/>
            <person name="Daniels C.J."/>
            <person name="Mao J.-I."/>
            <person name="Rice P."/>
            <person name="Noelling J."/>
            <person name="Reeve J.N."/>
        </authorList>
    </citation>
    <scope>NUCLEOTIDE SEQUENCE [LARGE SCALE GENOMIC DNA]</scope>
    <source>
        <strain>ATCC 29096 / DSM 1053 / JCM 10044 / NBRC 100330 / Delta H</strain>
    </source>
</reference>
<keyword id="KW-0174">Coenzyme M biosynthesis</keyword>
<keyword id="KW-0963">Cytoplasm</keyword>
<keyword id="KW-0520">NAD</keyword>
<keyword id="KW-0560">Oxidoreductase</keyword>
<keyword id="KW-1185">Reference proteome</keyword>
<accession>O27273</accession>
<name>COMC_METTH</name>
<sequence length="341" mass="36631">MRISPEEEVKIIKEILTAMNVPEESSDIVADVTLDADLKGFSSHGIGRFPQYVDGLRHGTIRADGDITIERETESTALINGNHIFGHVVAYRAMELAIEKARNTGVGLVGVHDSNHFGVAGYYSDMAVMNDMIGVVIANTEPAVAPIGGRKPILGTNPVAIGIPSNRYYVSVDMATSASARGKLLEAARKGESIPENVALDAEGKPTTDPEMALKGSILPFGGHKGYALSFMIEILAGPLVGAAFGTAVTGTANPEEMCTKGDLMMAIDPSKMVDPDEFRAQVDEFIEEVKSSGDVLIPGDIESMNIKRRRAEGIELDEKLLERILGIARELDINLEIKEL</sequence>
<protein>
    <recommendedName>
        <fullName>L-sulfolactate dehydrogenase</fullName>
        <ecNumber>1.1.1.337</ecNumber>
    </recommendedName>
    <alternativeName>
        <fullName>(R)-sulfolactate dehydrogenase</fullName>
    </alternativeName>
    <alternativeName>
        <fullName>L-2-hydroxycarboxylate dehydrogenase (NAD(+))</fullName>
    </alternativeName>
</protein>
<feature type="chain" id="PRO_0000083825" description="L-sulfolactate dehydrogenase">
    <location>
        <begin position="1"/>
        <end position="341"/>
    </location>
</feature>